<proteinExistence type="inferred from homology"/>
<dbReference type="EC" id="2.1.1.174" evidence="1"/>
<dbReference type="EMBL" id="CP000507">
    <property type="protein sequence ID" value="ABM00751.1"/>
    <property type="molecule type" value="Genomic_DNA"/>
</dbReference>
<dbReference type="RefSeq" id="WP_011760657.1">
    <property type="nucleotide sequence ID" value="NC_008700.1"/>
</dbReference>
<dbReference type="SMR" id="A1S8P4"/>
<dbReference type="STRING" id="326297.Sama_2548"/>
<dbReference type="KEGG" id="saz:Sama_2548"/>
<dbReference type="eggNOG" id="COG2813">
    <property type="taxonomic scope" value="Bacteria"/>
</dbReference>
<dbReference type="HOGENOM" id="CLU_040288_4_0_6"/>
<dbReference type="OrthoDB" id="29650at2"/>
<dbReference type="Proteomes" id="UP000009175">
    <property type="component" value="Chromosome"/>
</dbReference>
<dbReference type="GO" id="GO:0005737">
    <property type="term" value="C:cytoplasm"/>
    <property type="evidence" value="ECO:0007669"/>
    <property type="project" value="UniProtKB-SubCell"/>
</dbReference>
<dbReference type="GO" id="GO:0052916">
    <property type="term" value="F:23S rRNA (guanine(1835)-N(2))-methyltransferase activity"/>
    <property type="evidence" value="ECO:0007669"/>
    <property type="project" value="UniProtKB-EC"/>
</dbReference>
<dbReference type="GO" id="GO:0003676">
    <property type="term" value="F:nucleic acid binding"/>
    <property type="evidence" value="ECO:0007669"/>
    <property type="project" value="InterPro"/>
</dbReference>
<dbReference type="CDD" id="cd02440">
    <property type="entry name" value="AdoMet_MTases"/>
    <property type="match status" value="1"/>
</dbReference>
<dbReference type="Gene3D" id="3.40.50.150">
    <property type="entry name" value="Vaccinia Virus protein VP39"/>
    <property type="match status" value="2"/>
</dbReference>
<dbReference type="HAMAP" id="MF_01859">
    <property type="entry name" value="23SrRNA_methyltr_G"/>
    <property type="match status" value="1"/>
</dbReference>
<dbReference type="InterPro" id="IPR002052">
    <property type="entry name" value="DNA_methylase_N6_adenine_CS"/>
</dbReference>
<dbReference type="InterPro" id="IPR017237">
    <property type="entry name" value="rRNA_m2G-MeTrfase_RlmG"/>
</dbReference>
<dbReference type="InterPro" id="IPR046977">
    <property type="entry name" value="RsmC/RlmG"/>
</dbReference>
<dbReference type="InterPro" id="IPR029063">
    <property type="entry name" value="SAM-dependent_MTases_sf"/>
</dbReference>
<dbReference type="InterPro" id="IPR007848">
    <property type="entry name" value="Small_mtfrase_dom"/>
</dbReference>
<dbReference type="PANTHER" id="PTHR47816:SF5">
    <property type="entry name" value="RIBOSOMAL RNA LARGE SUBUNIT METHYLTRANSFERASE G"/>
    <property type="match status" value="1"/>
</dbReference>
<dbReference type="PANTHER" id="PTHR47816">
    <property type="entry name" value="RIBOSOMAL RNA SMALL SUBUNIT METHYLTRANSFERASE C"/>
    <property type="match status" value="1"/>
</dbReference>
<dbReference type="Pfam" id="PF05175">
    <property type="entry name" value="MTS"/>
    <property type="match status" value="1"/>
</dbReference>
<dbReference type="PIRSF" id="PIRSF037565">
    <property type="entry name" value="RRNA_m2G_Mtase_RsmD_prd"/>
    <property type="match status" value="1"/>
</dbReference>
<dbReference type="SUPFAM" id="SSF53335">
    <property type="entry name" value="S-adenosyl-L-methionine-dependent methyltransferases"/>
    <property type="match status" value="1"/>
</dbReference>
<protein>
    <recommendedName>
        <fullName evidence="1">Ribosomal RNA large subunit methyltransferase G</fullName>
        <ecNumber evidence="1">2.1.1.174</ecNumber>
    </recommendedName>
    <alternativeName>
        <fullName evidence="1">23S rRNA m2G1835 methyltransferase</fullName>
    </alternativeName>
    <alternativeName>
        <fullName evidence="1">rRNA (guanine-N(2)-)-methyltransferase RlmG</fullName>
    </alternativeName>
</protein>
<accession>A1S8P4</accession>
<organism>
    <name type="scientific">Shewanella amazonensis (strain ATCC BAA-1098 / SB2B)</name>
    <dbReference type="NCBI Taxonomy" id="326297"/>
    <lineage>
        <taxon>Bacteria</taxon>
        <taxon>Pseudomonadati</taxon>
        <taxon>Pseudomonadota</taxon>
        <taxon>Gammaproteobacteria</taxon>
        <taxon>Alteromonadales</taxon>
        <taxon>Shewanellaceae</taxon>
        <taxon>Shewanella</taxon>
    </lineage>
</organism>
<name>RLMG_SHEAM</name>
<evidence type="ECO:0000255" key="1">
    <source>
        <dbReference type="HAMAP-Rule" id="MF_01859"/>
    </source>
</evidence>
<sequence>MTTRFSAFLSGTPCELDLHRFPATSDPNLQAWDAADEHLLKYLNESNTELAAKFLVINDSFGALTCALATARSDADIVFAADGRTAHLGCKANLASNGLASAKVDYQDCTNLGSFAKGRQILMKLPKNLNFLTDTLSQLSQTLAAGDVILMGAKAKHINQSLLALIAKAVGPATASLTWKKTRIITITADGNPRPVSKPSVWDVPEHGLKVTNLSNVFAASKLDIGARLMMANLPQGHFSSVIDLGCGNGVLALKAAQTYPDARLYLVDESAMAVESARQNWALNALDEGRAEFIWDDCLSHLPNEVQADLVLCNPPFHQGEAITDHIAWQMFNDAKRALKPGGLLHIVGNRHLGYHIKLKRLFGNCKTIASNGKFVILQAVK</sequence>
<comment type="function">
    <text evidence="1">Specifically methylates the guanine in position 1835 (m2G1835) of 23S rRNA.</text>
</comment>
<comment type="catalytic activity">
    <reaction evidence="1">
        <text>guanosine(1835) in 23S rRNA + S-adenosyl-L-methionine = N(2)-methylguanosine(1835) in 23S rRNA + S-adenosyl-L-homocysteine + H(+)</text>
        <dbReference type="Rhea" id="RHEA:42744"/>
        <dbReference type="Rhea" id="RHEA-COMP:10217"/>
        <dbReference type="Rhea" id="RHEA-COMP:10218"/>
        <dbReference type="ChEBI" id="CHEBI:15378"/>
        <dbReference type="ChEBI" id="CHEBI:57856"/>
        <dbReference type="ChEBI" id="CHEBI:59789"/>
        <dbReference type="ChEBI" id="CHEBI:74269"/>
        <dbReference type="ChEBI" id="CHEBI:74481"/>
        <dbReference type="EC" id="2.1.1.174"/>
    </reaction>
</comment>
<comment type="subcellular location">
    <subcellularLocation>
        <location evidence="1">Cytoplasm</location>
    </subcellularLocation>
</comment>
<comment type="similarity">
    <text evidence="1">Belongs to the methyltransferase superfamily. RlmG family.</text>
</comment>
<feature type="chain" id="PRO_0000366504" description="Ribosomal RNA large subunit methyltransferase G">
    <location>
        <begin position="1"/>
        <end position="383"/>
    </location>
</feature>
<keyword id="KW-0963">Cytoplasm</keyword>
<keyword id="KW-0489">Methyltransferase</keyword>
<keyword id="KW-1185">Reference proteome</keyword>
<keyword id="KW-0698">rRNA processing</keyword>
<keyword id="KW-0949">S-adenosyl-L-methionine</keyword>
<keyword id="KW-0808">Transferase</keyword>
<gene>
    <name evidence="1" type="primary">rlmG</name>
    <name type="ordered locus">Sama_2548</name>
</gene>
<reference key="1">
    <citation type="submission" date="2006-12" db="EMBL/GenBank/DDBJ databases">
        <title>Complete sequence of Shewanella amazonensis SB2B.</title>
        <authorList>
            <consortium name="US DOE Joint Genome Institute"/>
            <person name="Copeland A."/>
            <person name="Lucas S."/>
            <person name="Lapidus A."/>
            <person name="Barry K."/>
            <person name="Detter J.C."/>
            <person name="Glavina del Rio T."/>
            <person name="Hammon N."/>
            <person name="Israni S."/>
            <person name="Dalin E."/>
            <person name="Tice H."/>
            <person name="Pitluck S."/>
            <person name="Munk A.C."/>
            <person name="Brettin T."/>
            <person name="Bruce D."/>
            <person name="Han C."/>
            <person name="Tapia R."/>
            <person name="Gilna P."/>
            <person name="Schmutz J."/>
            <person name="Larimer F."/>
            <person name="Land M."/>
            <person name="Hauser L."/>
            <person name="Kyrpides N."/>
            <person name="Mikhailova N."/>
            <person name="Fredrickson J."/>
            <person name="Richardson P."/>
        </authorList>
    </citation>
    <scope>NUCLEOTIDE SEQUENCE [LARGE SCALE GENOMIC DNA]</scope>
    <source>
        <strain>ATCC BAA-1098 / SB2B</strain>
    </source>
</reference>